<proteinExistence type="evidence at protein level"/>
<dbReference type="EC" id="3.4.21.-"/>
<dbReference type="EMBL" id="AF113140">
    <property type="protein sequence ID" value="AAD21580.1"/>
    <property type="molecule type" value="mRNA"/>
</dbReference>
<dbReference type="EMBL" id="AF113141">
    <property type="protein sequence ID" value="AAD21581.1"/>
    <property type="molecule type" value="Genomic_DNA"/>
</dbReference>
<dbReference type="EMBL" id="AF135023">
    <property type="protein sequence ID" value="AAD26424.2"/>
    <property type="molecule type" value="Genomic_DNA"/>
</dbReference>
<dbReference type="EMBL" id="AF148532">
    <property type="protein sequence ID" value="AAD38019.1"/>
    <property type="molecule type" value="Genomic_DNA"/>
</dbReference>
<dbReference type="EMBL" id="AF243527">
    <property type="protein sequence ID" value="AAG33357.1"/>
    <property type="molecule type" value="Genomic_DNA"/>
</dbReference>
<dbReference type="EMBL" id="AF228497">
    <property type="protein sequence ID" value="AAF70620.1"/>
    <property type="molecule type" value="Genomic_DNA"/>
</dbReference>
<dbReference type="EMBL" id="AF259969">
    <property type="protein sequence ID" value="AAF81227.1"/>
    <property type="molecule type" value="mRNA"/>
</dbReference>
<dbReference type="EMBL" id="AF259971">
    <property type="protein sequence ID" value="AAK71706.1"/>
    <property type="molecule type" value="mRNA"/>
</dbReference>
<dbReference type="EMBL" id="AC037199">
    <property type="status" value="NOT_ANNOTATED_CDS"/>
    <property type="molecule type" value="Genomic_DNA"/>
</dbReference>
<dbReference type="EMBL" id="BC069325">
    <property type="protein sequence ID" value="AAH69325.1"/>
    <property type="molecule type" value="mRNA"/>
</dbReference>
<dbReference type="EMBL" id="BC069403">
    <property type="protein sequence ID" value="AAH69403.1"/>
    <property type="molecule type" value="mRNA"/>
</dbReference>
<dbReference type="EMBL" id="BC069429">
    <property type="protein sequence ID" value="AAH69429.1"/>
    <property type="molecule type" value="mRNA"/>
</dbReference>
<dbReference type="EMBL" id="BC069489">
    <property type="protein sequence ID" value="AAH69489.1"/>
    <property type="molecule type" value="mRNA"/>
</dbReference>
<dbReference type="EMBL" id="BC096175">
    <property type="protein sequence ID" value="AAH96175.1"/>
    <property type="molecule type" value="mRNA"/>
</dbReference>
<dbReference type="EMBL" id="BC096178">
    <property type="protein sequence ID" value="AAH96178.1"/>
    <property type="molecule type" value="mRNA"/>
</dbReference>
<dbReference type="EMBL" id="AF126401">
    <property type="protein sequence ID" value="AAG43246.1"/>
    <property type="molecule type" value="mRNA"/>
</dbReference>
<dbReference type="CCDS" id="CCDS12809.1">
    <molecule id="Q9Y5K2-1"/>
</dbReference>
<dbReference type="RefSeq" id="NP_001289890.1">
    <property type="nucleotide sequence ID" value="NM_001302961.1"/>
</dbReference>
<dbReference type="RefSeq" id="NP_004908.4">
    <property type="nucleotide sequence ID" value="NM_004917.4"/>
</dbReference>
<dbReference type="PDB" id="2BDG">
    <property type="method" value="X-ray"/>
    <property type="resolution" value="1.95 A"/>
    <property type="chains" value="A/B=31-253"/>
</dbReference>
<dbReference type="PDB" id="2BDH">
    <property type="method" value="X-ray"/>
    <property type="resolution" value="3.00 A"/>
    <property type="chains" value="A/B/C/D=31-253"/>
</dbReference>
<dbReference type="PDB" id="2BDI">
    <property type="method" value="X-ray"/>
    <property type="resolution" value="3.00 A"/>
    <property type="chains" value="A/B/C/D/E/F/G/H/I/J/K/L/M/N/O/P=31-253"/>
</dbReference>
<dbReference type="PDB" id="4K1E">
    <property type="method" value="X-ray"/>
    <property type="resolution" value="1.30 A"/>
    <property type="chains" value="A=31-253"/>
</dbReference>
<dbReference type="PDB" id="4K8Y">
    <property type="method" value="X-ray"/>
    <property type="resolution" value="1.00 A"/>
    <property type="chains" value="A=31-253"/>
</dbReference>
<dbReference type="PDB" id="4KEL">
    <property type="method" value="X-ray"/>
    <property type="resolution" value="1.15 A"/>
    <property type="chains" value="A=31-253"/>
</dbReference>
<dbReference type="PDB" id="4KGA">
    <property type="method" value="X-ray"/>
    <property type="resolution" value="2.32 A"/>
    <property type="chains" value="A/B=31-253"/>
</dbReference>
<dbReference type="PDB" id="6KBR">
    <property type="method" value="X-ray"/>
    <property type="resolution" value="2.00 A"/>
    <property type="chains" value="A=1-254"/>
</dbReference>
<dbReference type="PDB" id="6NVB">
    <property type="method" value="X-ray"/>
    <property type="resolution" value="1.64 A"/>
    <property type="chains" value="A/B/C/D=31-254"/>
</dbReference>
<dbReference type="PDB" id="6O21">
    <property type="method" value="X-ray"/>
    <property type="resolution" value="1.15 A"/>
    <property type="chains" value="A=31-253"/>
</dbReference>
<dbReference type="PDB" id="7JOD">
    <property type="method" value="X-ray"/>
    <property type="resolution" value="1.33 A"/>
    <property type="chains" value="E=31-253"/>
</dbReference>
<dbReference type="PDB" id="7JOE">
    <property type="method" value="X-ray"/>
    <property type="resolution" value="2.60 A"/>
    <property type="chains" value="E=31-253"/>
</dbReference>
<dbReference type="PDB" id="7JOS">
    <property type="method" value="X-ray"/>
    <property type="resolution" value="2.10 A"/>
    <property type="chains" value="A/C/E/G/I/K/M=31-253"/>
</dbReference>
<dbReference type="PDB" id="7JOW">
    <property type="method" value="X-ray"/>
    <property type="resolution" value="1.91 A"/>
    <property type="chains" value="E=31-253"/>
</dbReference>
<dbReference type="PDB" id="7JQK">
    <property type="method" value="X-ray"/>
    <property type="resolution" value="1.33 A"/>
    <property type="chains" value="E=31-253"/>
</dbReference>
<dbReference type="PDB" id="7JQN">
    <property type="method" value="X-ray"/>
    <property type="resolution" value="1.50 A"/>
    <property type="chains" value="E=31-253"/>
</dbReference>
<dbReference type="PDB" id="7JQO">
    <property type="method" value="X-ray"/>
    <property type="resolution" value="1.60 A"/>
    <property type="chains" value="E=31-253"/>
</dbReference>
<dbReference type="PDB" id="7JQV">
    <property type="method" value="X-ray"/>
    <property type="resolution" value="2.10 A"/>
    <property type="chains" value="E=31-253"/>
</dbReference>
<dbReference type="PDBsum" id="2BDG"/>
<dbReference type="PDBsum" id="2BDH"/>
<dbReference type="PDBsum" id="2BDI"/>
<dbReference type="PDBsum" id="4K1E"/>
<dbReference type="PDBsum" id="4K8Y"/>
<dbReference type="PDBsum" id="4KEL"/>
<dbReference type="PDBsum" id="4KGA"/>
<dbReference type="PDBsum" id="6KBR"/>
<dbReference type="PDBsum" id="6NVB"/>
<dbReference type="PDBsum" id="6O21"/>
<dbReference type="PDBsum" id="7JOD"/>
<dbReference type="PDBsum" id="7JOE"/>
<dbReference type="PDBsum" id="7JOS"/>
<dbReference type="PDBsum" id="7JOW"/>
<dbReference type="PDBsum" id="7JQK"/>
<dbReference type="PDBsum" id="7JQN"/>
<dbReference type="PDBsum" id="7JQO"/>
<dbReference type="PDBsum" id="7JQV"/>
<dbReference type="SMR" id="Q9Y5K2"/>
<dbReference type="BioGRID" id="114982">
    <property type="interactions" value="10"/>
</dbReference>
<dbReference type="FunCoup" id="Q9Y5K2">
    <property type="interactions" value="64"/>
</dbReference>
<dbReference type="IntAct" id="Q9Y5K2">
    <property type="interactions" value="6"/>
</dbReference>
<dbReference type="STRING" id="9606.ENSP00000326159"/>
<dbReference type="BindingDB" id="Q9Y5K2"/>
<dbReference type="ChEMBL" id="CHEMBL4446"/>
<dbReference type="GuidetoPHARMACOLOGY" id="2374"/>
<dbReference type="MEROPS" id="S01.251"/>
<dbReference type="GlyCosmos" id="Q9Y5K2">
    <property type="glycosylation" value="1 site, No reported glycans"/>
</dbReference>
<dbReference type="GlyGen" id="Q9Y5K2">
    <property type="glycosylation" value="1 site"/>
</dbReference>
<dbReference type="PhosphoSitePlus" id="Q9Y5K2"/>
<dbReference type="BioMuta" id="KLK4"/>
<dbReference type="DMDM" id="317373372"/>
<dbReference type="jPOST" id="Q9Y5K2"/>
<dbReference type="MassIVE" id="Q9Y5K2"/>
<dbReference type="PaxDb" id="9606-ENSP00000326159"/>
<dbReference type="PeptideAtlas" id="Q9Y5K2"/>
<dbReference type="Antibodypedia" id="18932">
    <property type="antibodies" value="292 antibodies from 35 providers"/>
</dbReference>
<dbReference type="DNASU" id="9622"/>
<dbReference type="Ensembl" id="ENST00000431178.2">
    <molecule id="Q9Y5K2-2"/>
    <property type="protein sequence ID" value="ENSP00000399448.2"/>
    <property type="gene ID" value="ENSG00000167749.12"/>
</dbReference>
<dbReference type="GeneID" id="9622"/>
<dbReference type="KEGG" id="hsa:9622"/>
<dbReference type="UCSC" id="uc002pty.2">
    <molecule id="Q9Y5K2-1"/>
    <property type="organism name" value="human"/>
</dbReference>
<dbReference type="AGR" id="HGNC:6365"/>
<dbReference type="CTD" id="9622"/>
<dbReference type="DisGeNET" id="9622"/>
<dbReference type="GeneCards" id="KLK4"/>
<dbReference type="HGNC" id="HGNC:6365">
    <property type="gene designation" value="KLK4"/>
</dbReference>
<dbReference type="HPA" id="ENSG00000167749">
    <property type="expression patterns" value="Tissue enriched (prostate)"/>
</dbReference>
<dbReference type="MalaCards" id="KLK4"/>
<dbReference type="MIM" id="204700">
    <property type="type" value="phenotype"/>
</dbReference>
<dbReference type="MIM" id="603767">
    <property type="type" value="gene"/>
</dbReference>
<dbReference type="neXtProt" id="NX_Q9Y5K2"/>
<dbReference type="OpenTargets" id="ENSG00000167749"/>
<dbReference type="Orphanet" id="100033">
    <property type="disease" value="Hypomaturation amelogenesis imperfecta"/>
</dbReference>
<dbReference type="PharmGKB" id="PA30154"/>
<dbReference type="VEuPathDB" id="HostDB:ENSG00000167749"/>
<dbReference type="eggNOG" id="KOG3627">
    <property type="taxonomic scope" value="Eukaryota"/>
</dbReference>
<dbReference type="GeneTree" id="ENSGT01020000230389"/>
<dbReference type="HOGENOM" id="CLU_006842_1_7_1"/>
<dbReference type="InParanoid" id="Q9Y5K2"/>
<dbReference type="OMA" id="CKFTNWI"/>
<dbReference type="OrthoDB" id="6755574at2759"/>
<dbReference type="PAN-GO" id="Q9Y5K2">
    <property type="GO annotations" value="3 GO annotations based on evolutionary models"/>
</dbReference>
<dbReference type="PhylomeDB" id="Q9Y5K2"/>
<dbReference type="TreeFam" id="TF331065"/>
<dbReference type="BRENDA" id="3.4.21.B12">
    <property type="organism ID" value="2681"/>
</dbReference>
<dbReference type="PathwayCommons" id="Q9Y5K2"/>
<dbReference type="SignaLink" id="Q9Y5K2"/>
<dbReference type="SIGNOR" id="Q9Y5K2"/>
<dbReference type="BioGRID-ORCS" id="9622">
    <property type="hits" value="9 hits in 1146 CRISPR screens"/>
</dbReference>
<dbReference type="ChiTaRS" id="KLK4">
    <property type="organism name" value="human"/>
</dbReference>
<dbReference type="EvolutionaryTrace" id="Q9Y5K2"/>
<dbReference type="GeneWiki" id="KLK4"/>
<dbReference type="GenomeRNAi" id="9622"/>
<dbReference type="Pharos" id="Q9Y5K2">
    <property type="development level" value="Tchem"/>
</dbReference>
<dbReference type="PRO" id="PR:Q9Y5K2"/>
<dbReference type="Proteomes" id="UP000005640">
    <property type="component" value="Chromosome 19"/>
</dbReference>
<dbReference type="RNAct" id="Q9Y5K2">
    <property type="molecule type" value="protein"/>
</dbReference>
<dbReference type="Bgee" id="ENSG00000167749">
    <property type="expression patterns" value="Expressed in prostate gland and 125 other cell types or tissues"/>
</dbReference>
<dbReference type="ExpressionAtlas" id="Q9Y5K2">
    <property type="expression patterns" value="baseline and differential"/>
</dbReference>
<dbReference type="GO" id="GO:0005576">
    <property type="term" value="C:extracellular region"/>
    <property type="evidence" value="ECO:0000304"/>
    <property type="project" value="ProtInc"/>
</dbReference>
<dbReference type="GO" id="GO:0005615">
    <property type="term" value="C:extracellular space"/>
    <property type="evidence" value="ECO:0000318"/>
    <property type="project" value="GO_Central"/>
</dbReference>
<dbReference type="GO" id="GO:0030141">
    <property type="term" value="C:secretory granule"/>
    <property type="evidence" value="ECO:0000318"/>
    <property type="project" value="GO_Central"/>
</dbReference>
<dbReference type="GO" id="GO:0046872">
    <property type="term" value="F:metal ion binding"/>
    <property type="evidence" value="ECO:0007669"/>
    <property type="project" value="UniProtKB-KW"/>
</dbReference>
<dbReference type="GO" id="GO:0004252">
    <property type="term" value="F:serine-type endopeptidase activity"/>
    <property type="evidence" value="ECO:0000318"/>
    <property type="project" value="GO_Central"/>
</dbReference>
<dbReference type="GO" id="GO:0008236">
    <property type="term" value="F:serine-type peptidase activity"/>
    <property type="evidence" value="ECO:0000304"/>
    <property type="project" value="ProtInc"/>
</dbReference>
<dbReference type="GO" id="GO:0097186">
    <property type="term" value="P:amelogenesis"/>
    <property type="evidence" value="ECO:0000315"/>
    <property type="project" value="UniProtKB"/>
</dbReference>
<dbReference type="GO" id="GO:0031214">
    <property type="term" value="P:biomineral tissue development"/>
    <property type="evidence" value="ECO:0007669"/>
    <property type="project" value="UniProtKB-KW"/>
</dbReference>
<dbReference type="GO" id="GO:0022617">
    <property type="term" value="P:extracellular matrix disassembly"/>
    <property type="evidence" value="ECO:0000318"/>
    <property type="project" value="GO_Central"/>
</dbReference>
<dbReference type="GO" id="GO:0051604">
    <property type="term" value="P:protein maturation"/>
    <property type="evidence" value="ECO:0000318"/>
    <property type="project" value="GO_Central"/>
</dbReference>
<dbReference type="GO" id="GO:0006508">
    <property type="term" value="P:proteolysis"/>
    <property type="evidence" value="ECO:0000303"/>
    <property type="project" value="UniProtKB"/>
</dbReference>
<dbReference type="CDD" id="cd00190">
    <property type="entry name" value="Tryp_SPc"/>
    <property type="match status" value="1"/>
</dbReference>
<dbReference type="FunFam" id="2.40.10.10:FF:000091">
    <property type="entry name" value="Kallikrein-4"/>
    <property type="match status" value="1"/>
</dbReference>
<dbReference type="FunFam" id="2.40.10.10:FF:000100">
    <property type="entry name" value="Kallikrein-4"/>
    <property type="match status" value="1"/>
</dbReference>
<dbReference type="Gene3D" id="2.40.10.10">
    <property type="entry name" value="Trypsin-like serine proteases"/>
    <property type="match status" value="2"/>
</dbReference>
<dbReference type="InterPro" id="IPR009003">
    <property type="entry name" value="Peptidase_S1_PA"/>
</dbReference>
<dbReference type="InterPro" id="IPR043504">
    <property type="entry name" value="Peptidase_S1_PA_chymotrypsin"/>
</dbReference>
<dbReference type="InterPro" id="IPR001314">
    <property type="entry name" value="Peptidase_S1A"/>
</dbReference>
<dbReference type="InterPro" id="IPR001254">
    <property type="entry name" value="Trypsin_dom"/>
</dbReference>
<dbReference type="InterPro" id="IPR018114">
    <property type="entry name" value="TRYPSIN_HIS"/>
</dbReference>
<dbReference type="InterPro" id="IPR033116">
    <property type="entry name" value="TRYPSIN_SER"/>
</dbReference>
<dbReference type="PANTHER" id="PTHR24271:SF65">
    <property type="entry name" value="KALLIKREIN-4"/>
    <property type="match status" value="1"/>
</dbReference>
<dbReference type="PANTHER" id="PTHR24271">
    <property type="entry name" value="KALLIKREIN-RELATED"/>
    <property type="match status" value="1"/>
</dbReference>
<dbReference type="Pfam" id="PF00089">
    <property type="entry name" value="Trypsin"/>
    <property type="match status" value="1"/>
</dbReference>
<dbReference type="PRINTS" id="PR00722">
    <property type="entry name" value="CHYMOTRYPSIN"/>
</dbReference>
<dbReference type="SMART" id="SM00020">
    <property type="entry name" value="Tryp_SPc"/>
    <property type="match status" value="1"/>
</dbReference>
<dbReference type="SUPFAM" id="SSF50494">
    <property type="entry name" value="Trypsin-like serine proteases"/>
    <property type="match status" value="1"/>
</dbReference>
<dbReference type="PROSITE" id="PS50240">
    <property type="entry name" value="TRYPSIN_DOM"/>
    <property type="match status" value="1"/>
</dbReference>
<dbReference type="PROSITE" id="PS00134">
    <property type="entry name" value="TRYPSIN_HIS"/>
    <property type="match status" value="1"/>
</dbReference>
<dbReference type="PROSITE" id="PS00135">
    <property type="entry name" value="TRYPSIN_SER"/>
    <property type="match status" value="1"/>
</dbReference>
<evidence type="ECO:0000250" key="1">
    <source>
        <dbReference type="UniProtKB" id="Q9Z0M1"/>
    </source>
</evidence>
<evidence type="ECO:0000255" key="2"/>
<evidence type="ECO:0000255" key="3">
    <source>
        <dbReference type="PROSITE-ProRule" id="PRU00274"/>
    </source>
</evidence>
<evidence type="ECO:0000269" key="4">
    <source>
    </source>
</evidence>
<evidence type="ECO:0000269" key="5">
    <source>
    </source>
</evidence>
<evidence type="ECO:0000269" key="6">
    <source>
    </source>
</evidence>
<evidence type="ECO:0000269" key="7">
    <source>
    </source>
</evidence>
<evidence type="ECO:0000269" key="8">
    <source>
    </source>
</evidence>
<evidence type="ECO:0000269" key="9">
    <source>
    </source>
</evidence>
<evidence type="ECO:0000269" key="10">
    <source>
    </source>
</evidence>
<evidence type="ECO:0000269" key="11">
    <source ref="9"/>
</evidence>
<evidence type="ECO:0000303" key="12">
    <source>
    </source>
</evidence>
<evidence type="ECO:0000305" key="13">
    <source>
    </source>
</evidence>
<evidence type="ECO:0007829" key="14">
    <source>
        <dbReference type="PDB" id="2BDH"/>
    </source>
</evidence>
<evidence type="ECO:0007829" key="15">
    <source>
        <dbReference type="PDB" id="4K8Y"/>
    </source>
</evidence>
<evidence type="ECO:0007829" key="16">
    <source>
        <dbReference type="PDB" id="7JOD"/>
    </source>
</evidence>
<sequence length="254" mass="27032">MATAGNPWGWFLGYLILGVAGSLVSGSCSQIINGEDCSPHSQPWQAALVMENELFCSGVLVHPQWVLSAAHCFQNSYTIGLGLHSLEADQEPGSQMVEASLSVRHPEYNRPLLANDLMLIKLDESVSESDTIRSISIASQCPTAGNSCLVSGWGLLANGRMPTVLQCVNVSVVSEEVCSKLYDPLYHPSMFCAGGGHDQKDSCNGDSGGPLICNGYLQGLVSFGKAPCGQVGVPGVYTNLCKFTEWIEKTVQAS</sequence>
<comment type="function">
    <text evidence="1 8">Has a major role in enamel formation (PubMed:15235027). Required during the maturation stage of tooth development for clearance of enamel proteins and normal structural patterning of the crystalline matrix (By similarity).</text>
</comment>
<comment type="interaction">
    <interactant intactId="EBI-10224152">
        <id>Q9Y5K2</id>
    </interactant>
    <interactant intactId="EBI-10200479">
        <id>P20155</id>
        <label>SPINK2</label>
    </interactant>
    <organismsDiffer>false</organismsDiffer>
    <experiments>4</experiments>
</comment>
<comment type="interaction">
    <interactant intactId="EBI-10224152">
        <id>Q9Y5K2</id>
    </interactant>
    <interactant intactId="EBI-3951628">
        <id>Q06418</id>
        <label>TYRO3</label>
    </interactant>
    <organismsDiffer>false</organismsDiffer>
    <experiments>3</experiments>
</comment>
<comment type="subcellular location">
    <subcellularLocation>
        <location>Secreted</location>
    </subcellularLocation>
</comment>
<comment type="alternative products">
    <event type="alternative splicing"/>
    <isoform>
        <id>Q9Y5K2-1</id>
        <name>1</name>
        <sequence type="displayed"/>
    </isoform>
    <isoform>
        <id>Q9Y5K2-2</id>
        <name>2</name>
        <sequence type="described" ref="VSP_056629 VSP_056630"/>
    </isoform>
</comment>
<comment type="tissue specificity">
    <text>Expressed in prostate.</text>
</comment>
<comment type="PTM">
    <text evidence="1">N-glycosylated. The N-glycan structures are of complex diantennary or triantennary type, which may be further modified with up to 2 sialic acid residues.</text>
</comment>
<comment type="disease" evidence="8">
    <disease id="DI-00091">
        <name>Amelogenesis imperfecta, hypomaturation type, 2A1</name>
        <acronym>AI2A1</acronym>
        <description>A defect of enamel formation. The disorder involves both primary and secondary dentitions. The teeth have a shiny agar jelly appearance and the enamel is softer than normal. Brown pigment is present in middle layers of enamel.</description>
        <dbReference type="MIM" id="204700"/>
    </disease>
    <text>The disease is caused by variants affecting the gene represented in this entry.</text>
</comment>
<comment type="similarity">
    <text evidence="3">Belongs to the peptidase S1 family. Kallikrein subfamily.</text>
</comment>
<comment type="online information" name="Atlas of Genetics and Cytogenetics in Oncology and Haematology">
    <link uri="https://atlasgeneticsoncology.org/gene/41084/KLK4"/>
</comment>
<feature type="signal peptide" evidence="2">
    <location>
        <begin position="1"/>
        <end position="26"/>
    </location>
</feature>
<feature type="propeptide" id="PRO_0000027937" evidence="13">
    <location>
        <begin position="27"/>
        <end position="30"/>
    </location>
</feature>
<feature type="chain" id="PRO_0000027938" description="Kallikrein-4">
    <location>
        <begin position="31"/>
        <end position="254"/>
    </location>
</feature>
<feature type="domain" description="Peptidase S1" evidence="3">
    <location>
        <begin position="31"/>
        <end position="252"/>
    </location>
</feature>
<feature type="active site" description="Charge relay system" evidence="10">
    <location>
        <position position="71"/>
    </location>
</feature>
<feature type="active site" description="Charge relay system" evidence="10">
    <location>
        <position position="116"/>
    </location>
</feature>
<feature type="active site" description="Charge relay system" evidence="10">
    <location>
        <position position="207"/>
    </location>
</feature>
<feature type="binding site" evidence="10">
    <location>
        <position position="40"/>
    </location>
    <ligand>
        <name>Zn(2+)</name>
        <dbReference type="ChEBI" id="CHEBI:29105"/>
    </ligand>
</feature>
<feature type="binding site" evidence="10">
    <location>
        <position position="91"/>
    </location>
    <ligand>
        <name>Zn(2+)</name>
        <dbReference type="ChEBI" id="CHEBI:29105"/>
    </ligand>
</feature>
<feature type="glycosylation site" description="N-linked (GlcNAc...) asparagine" evidence="2">
    <location>
        <position position="169"/>
    </location>
</feature>
<feature type="disulfide bond" evidence="3 10">
    <location>
        <begin position="37"/>
        <end position="167"/>
    </location>
</feature>
<feature type="disulfide bond" evidence="3 10">
    <location>
        <begin position="56"/>
        <end position="72"/>
    </location>
</feature>
<feature type="disulfide bond" evidence="3 10">
    <location>
        <begin position="141"/>
        <end position="241"/>
    </location>
</feature>
<feature type="disulfide bond" evidence="3 10">
    <location>
        <begin position="148"/>
        <end position="213"/>
    </location>
</feature>
<feature type="disulfide bond" evidence="3 10">
    <location>
        <begin position="178"/>
        <end position="192"/>
    </location>
</feature>
<feature type="disulfide bond" evidence="3 10">
    <location>
        <begin position="203"/>
        <end position="228"/>
    </location>
</feature>
<feature type="splice variant" id="VSP_056629" description="In isoform 2." evidence="12">
    <location>
        <begin position="1"/>
        <end position="49"/>
    </location>
</feature>
<feature type="splice variant" id="VSP_056630" description="In isoform 2." evidence="12">
    <location>
        <begin position="160"/>
        <end position="254"/>
    </location>
</feature>
<feature type="sequence variant" id="VAR_028364" description="In dbSNP:rs1654551." evidence="8">
    <original>S</original>
    <variation>A</variation>
    <location>
        <position position="22"/>
    </location>
</feature>
<feature type="sequence variant" id="VAR_033009" description="In dbSNP:rs34626614.">
    <original>G</original>
    <variation>D</variation>
    <location>
        <position position="159"/>
    </location>
</feature>
<feature type="sequence variant" id="VAR_028365" description="In dbSNP:rs2569527." evidence="4 5 6 7 9 10 11">
    <original>H</original>
    <variation>Q</variation>
    <location>
        <position position="197"/>
    </location>
</feature>
<feature type="strand" evidence="15">
    <location>
        <begin position="45"/>
        <end position="50"/>
    </location>
</feature>
<feature type="strand" evidence="15">
    <location>
        <begin position="53"/>
        <end position="62"/>
    </location>
</feature>
<feature type="strand" evidence="15">
    <location>
        <begin position="65"/>
        <end position="68"/>
    </location>
</feature>
<feature type="helix" evidence="15">
    <location>
        <begin position="70"/>
        <end position="72"/>
    </location>
</feature>
<feature type="strand" evidence="15">
    <location>
        <begin position="75"/>
        <end position="82"/>
    </location>
</feature>
<feature type="strand" evidence="15">
    <location>
        <begin position="84"/>
        <end position="86"/>
    </location>
</feature>
<feature type="helix" evidence="15">
    <location>
        <begin position="88"/>
        <end position="90"/>
    </location>
</feature>
<feature type="strand" evidence="15">
    <location>
        <begin position="95"/>
        <end position="99"/>
    </location>
</feature>
<feature type="strand" evidence="15">
    <location>
        <begin position="101"/>
        <end position="104"/>
    </location>
</feature>
<feature type="turn" evidence="15">
    <location>
        <begin position="106"/>
        <end position="109"/>
    </location>
</feature>
<feature type="strand" evidence="15">
    <location>
        <begin position="118"/>
        <end position="121"/>
    </location>
</feature>
<feature type="strand" evidence="16">
    <location>
        <begin position="130"/>
        <end position="132"/>
    </location>
</feature>
<feature type="strand" evidence="15">
    <location>
        <begin position="147"/>
        <end position="154"/>
    </location>
</feature>
<feature type="strand" evidence="14">
    <location>
        <begin position="157"/>
        <end position="160"/>
    </location>
</feature>
<feature type="strand" evidence="15">
    <location>
        <begin position="166"/>
        <end position="172"/>
    </location>
</feature>
<feature type="helix" evidence="15">
    <location>
        <begin position="175"/>
        <end position="182"/>
    </location>
</feature>
<feature type="turn" evidence="15">
    <location>
        <begin position="183"/>
        <end position="185"/>
    </location>
</feature>
<feature type="strand" evidence="15">
    <location>
        <begin position="190"/>
        <end position="193"/>
    </location>
</feature>
<feature type="strand" evidence="15">
    <location>
        <begin position="210"/>
        <end position="213"/>
    </location>
</feature>
<feature type="strand" evidence="15">
    <location>
        <begin position="216"/>
        <end position="227"/>
    </location>
</feature>
<feature type="strand" evidence="15">
    <location>
        <begin position="235"/>
        <end position="239"/>
    </location>
</feature>
<feature type="helix" evidence="15">
    <location>
        <begin position="240"/>
        <end position="242"/>
    </location>
</feature>
<feature type="helix" evidence="15">
    <location>
        <begin position="244"/>
        <end position="252"/>
    </location>
</feature>
<keyword id="KW-0002">3D-structure</keyword>
<keyword id="KW-0025">Alternative splicing</keyword>
<keyword id="KW-0986">Amelogenesis imperfecta</keyword>
<keyword id="KW-0091">Biomineralization</keyword>
<keyword id="KW-0903">Direct protein sequencing</keyword>
<keyword id="KW-1015">Disulfide bond</keyword>
<keyword id="KW-0325">Glycoprotein</keyword>
<keyword id="KW-0378">Hydrolase</keyword>
<keyword id="KW-0479">Metal-binding</keyword>
<keyword id="KW-0645">Protease</keyword>
<keyword id="KW-1267">Proteomics identification</keyword>
<keyword id="KW-1185">Reference proteome</keyword>
<keyword id="KW-0964">Secreted</keyword>
<keyword id="KW-0720">Serine protease</keyword>
<keyword id="KW-0732">Signal</keyword>
<keyword id="KW-0862">Zinc</keyword>
<keyword id="KW-0865">Zymogen</keyword>
<reference key="1">
    <citation type="journal article" date="1999" name="Proc. Natl. Acad. Sci. U.S.A.">
        <title>Molecular cloning and characterization of prostase, an androgen-regulated serine protease with prostate-restricted expression.</title>
        <authorList>
            <person name="Nelson P.S."/>
            <person name="Gan L."/>
            <person name="Ferguson C."/>
            <person name="Moss P."/>
            <person name="Gelinas R."/>
            <person name="Hood L."/>
            <person name="Wang K."/>
        </authorList>
    </citation>
    <scope>NUCLEOTIDE SEQUENCE [GENOMIC DNA / MRNA] (ISOFORM 1)</scope>
</reference>
<reference key="2">
    <citation type="journal article" date="1999" name="Cancer Res.">
        <title>Prostase/KLK-L1 is a new member of the human kallikrein gene family, is expressed in prostate and breast tissues, and is hormonally regulated.</title>
        <authorList>
            <person name="Yousef G.M."/>
            <person name="Obiezu C.V."/>
            <person name="Luo L.-Y."/>
            <person name="Black M.H."/>
            <person name="Diamandis E.P."/>
        </authorList>
    </citation>
    <scope>NUCLEOTIDE SEQUENCE [GENOMIC DNA]</scope>
    <scope>VARIANT GLN-197</scope>
</reference>
<reference key="3">
    <citation type="journal article" date="1999" name="J. Biol. Chem.">
        <title>Localization of a new prostate-specific antigen-related serine protease gene, KLK4, is evidence for an expanded human kallikrein gene family cluster on chromosome 19q13.3-13.4.</title>
        <authorList>
            <person name="Stephenson S.A."/>
            <person name="Verity K."/>
            <person name="Ashworth L.K."/>
            <person name="Clements J.A."/>
        </authorList>
    </citation>
    <scope>NUCLEOTIDE SEQUENCE [GENOMIC DNA]</scope>
    <scope>VARIANT GLN-197</scope>
</reference>
<reference key="4">
    <citation type="journal article" date="2000" name="Gene">
        <title>Sequencing and expression analysis of the serine protease gene cluster located in chromosome 19q13 region.</title>
        <authorList>
            <person name="Gan L."/>
            <person name="Lee I."/>
            <person name="Smith R."/>
            <person name="Argonza-Barrett R."/>
            <person name="Lei H."/>
            <person name="McCuaig J."/>
            <person name="Moss P."/>
            <person name="Paeper B."/>
            <person name="Wang K."/>
        </authorList>
    </citation>
    <scope>NUCLEOTIDE SEQUENCE [GENOMIC DNA]</scope>
</reference>
<reference key="5">
    <citation type="journal article" date="2000" name="Gene">
        <title>Characterization of the mouse and human PRSS17 genes, their relationship to other serine proteases, and the expression of PRSS17 in developing mouse incisors.</title>
        <authorList>
            <person name="Hu J.C.-C."/>
            <person name="Zhang C."/>
            <person name="Sun X."/>
            <person name="Yang Y."/>
            <person name="Cao X."/>
            <person name="Ryu O."/>
            <person name="Simmer J.P."/>
        </authorList>
    </citation>
    <scope>NUCLEOTIDE SEQUENCE [GENOMIC DNA]</scope>
    <scope>CHARACTERIZATION</scope>
    <scope>VARIANT GLN-197</scope>
</reference>
<reference key="6">
    <citation type="journal article" date="2001" name="DNA Cell Biol.">
        <title>Distinctly different gene structure of KLK4/KLK-L1/prostase/ARM1 compared with other members of the kallikrein family: intracellular localization, alternative cDNA forms, and Regulation by multiple hormones.</title>
        <authorList>
            <person name="Korkmaz K.S."/>
            <person name="Korkmaz C.G."/>
            <person name="Pretlow T.G."/>
            <person name="Saatcioglu F."/>
        </authorList>
    </citation>
    <scope>NUCLEOTIDE SEQUENCE [MRNA] (ISOFORMS 1 AND 2)</scope>
    <scope>VARIANT GLN-197</scope>
    <scope>ALTERNATIVE SPLICING</scope>
    <source>
        <tissue>Prostatic carcinoma</tissue>
    </source>
</reference>
<reference key="7">
    <citation type="journal article" date="2004" name="Nature">
        <title>The DNA sequence and biology of human chromosome 19.</title>
        <authorList>
            <person name="Grimwood J."/>
            <person name="Gordon L.A."/>
            <person name="Olsen A.S."/>
            <person name="Terry A."/>
            <person name="Schmutz J."/>
            <person name="Lamerdin J.E."/>
            <person name="Hellsten U."/>
            <person name="Goodstein D."/>
            <person name="Couronne O."/>
            <person name="Tran-Gyamfi M."/>
            <person name="Aerts A."/>
            <person name="Altherr M."/>
            <person name="Ashworth L."/>
            <person name="Bajorek E."/>
            <person name="Black S."/>
            <person name="Branscomb E."/>
            <person name="Caenepeel S."/>
            <person name="Carrano A.V."/>
            <person name="Caoile C."/>
            <person name="Chan Y.M."/>
            <person name="Christensen M."/>
            <person name="Cleland C.A."/>
            <person name="Copeland A."/>
            <person name="Dalin E."/>
            <person name="Dehal P."/>
            <person name="Denys M."/>
            <person name="Detter J.C."/>
            <person name="Escobar J."/>
            <person name="Flowers D."/>
            <person name="Fotopulos D."/>
            <person name="Garcia C."/>
            <person name="Georgescu A.M."/>
            <person name="Glavina T."/>
            <person name="Gomez M."/>
            <person name="Gonzales E."/>
            <person name="Groza M."/>
            <person name="Hammon N."/>
            <person name="Hawkins T."/>
            <person name="Haydu L."/>
            <person name="Ho I."/>
            <person name="Huang W."/>
            <person name="Israni S."/>
            <person name="Jett J."/>
            <person name="Kadner K."/>
            <person name="Kimball H."/>
            <person name="Kobayashi A."/>
            <person name="Larionov V."/>
            <person name="Leem S.-H."/>
            <person name="Lopez F."/>
            <person name="Lou Y."/>
            <person name="Lowry S."/>
            <person name="Malfatti S."/>
            <person name="Martinez D."/>
            <person name="McCready P.M."/>
            <person name="Medina C."/>
            <person name="Morgan J."/>
            <person name="Nelson K."/>
            <person name="Nolan M."/>
            <person name="Ovcharenko I."/>
            <person name="Pitluck S."/>
            <person name="Pollard M."/>
            <person name="Popkie A.P."/>
            <person name="Predki P."/>
            <person name="Quan G."/>
            <person name="Ramirez L."/>
            <person name="Rash S."/>
            <person name="Retterer J."/>
            <person name="Rodriguez A."/>
            <person name="Rogers S."/>
            <person name="Salamov A."/>
            <person name="Salazar A."/>
            <person name="She X."/>
            <person name="Smith D."/>
            <person name="Slezak T."/>
            <person name="Solovyev V."/>
            <person name="Thayer N."/>
            <person name="Tice H."/>
            <person name="Tsai M."/>
            <person name="Ustaszewska A."/>
            <person name="Vo N."/>
            <person name="Wagner M."/>
            <person name="Wheeler J."/>
            <person name="Wu K."/>
            <person name="Xie G."/>
            <person name="Yang J."/>
            <person name="Dubchak I."/>
            <person name="Furey T.S."/>
            <person name="DeJong P."/>
            <person name="Dickson M."/>
            <person name="Gordon D."/>
            <person name="Eichler E.E."/>
            <person name="Pennacchio L.A."/>
            <person name="Richardson P."/>
            <person name="Stubbs L."/>
            <person name="Rokhsar D.S."/>
            <person name="Myers R.M."/>
            <person name="Rubin E.M."/>
            <person name="Lucas S.M."/>
        </authorList>
    </citation>
    <scope>NUCLEOTIDE SEQUENCE [LARGE SCALE GENOMIC DNA]</scope>
</reference>
<reference key="8">
    <citation type="journal article" date="2004" name="Genome Res.">
        <title>The status, quality, and expansion of the NIH full-length cDNA project: the Mammalian Gene Collection (MGC).</title>
        <authorList>
            <consortium name="The MGC Project Team"/>
        </authorList>
    </citation>
    <scope>NUCLEOTIDE SEQUENCE [LARGE SCALE MRNA] (ISOFORM 1)</scope>
    <scope>VARIANT GLN-197</scope>
</reference>
<reference key="9">
    <citation type="book" date="2000" name="Chemistry and biology of mineralized tissues">
        <title>Cloning and characterization of a cDNA encoding human EMSP1.</title>
        <editorList>
            <person name="Goldberg M."/>
        </editorList>
        <authorList>
            <person name="Simmer J.P."/>
            <person name="Ryu O.H."/>
            <person name="Qian Q."/>
            <person name="Zhang C."/>
            <person name="Cao X."/>
            <person name="Sun X."/>
            <person name="Hu C.-C."/>
        </authorList>
    </citation>
    <scope>NUCLEOTIDE SEQUENCE [MRNA] OF 22-254 (ISOFORM 1)</scope>
    <scope>VARIANT GLN-197</scope>
</reference>
<reference key="10">
    <citation type="journal article" date="2006" name="J. Mol. Biol.">
        <title>Crystal structures of human tissue kallikrein 4: activity modulation by a specific zinc binding site.</title>
        <authorList>
            <person name="Debela M."/>
            <person name="Magdolen V."/>
            <person name="Grimminger V."/>
            <person name="Sommerhoff C."/>
            <person name="Messerschmidt A."/>
            <person name="Huber R."/>
            <person name="Friedrich R."/>
            <person name="Bode W."/>
            <person name="Goettig P."/>
        </authorList>
    </citation>
    <scope>PROTEIN SEQUENCE OF 31-35</scope>
    <scope>X-RAY CRYSTALLOGRAPHY (1.95 ANGSTROMS) OF 31-253</scope>
    <scope>ACTIVE SITE</scope>
    <scope>ZINC-BINDING SITES</scope>
    <scope>DISULFIDE BONDS</scope>
    <scope>VARIANT GLN-197</scope>
</reference>
<reference key="11">
    <citation type="journal article" date="2004" name="J. Med. Genet.">
        <title>Mutation in kallikrein 4 causes autosomal recessive hypomaturation amelogenesis imperfecta.</title>
        <authorList>
            <person name="Hart P.S."/>
            <person name="Hart T.C."/>
            <person name="Michalec M.D."/>
            <person name="Ryu O.H."/>
            <person name="Simmons D."/>
            <person name="Hong S."/>
            <person name="Wright J.T."/>
        </authorList>
    </citation>
    <scope>FUNCTION</scope>
    <scope>INVOLVEMENT IN AI2A1</scope>
    <scope>VARIANT ALA-22</scope>
</reference>
<accession>Q9Y5K2</accession>
<accession>Q4VB16</accession>
<accession>Q96RU5</accession>
<accession>Q9GZL6</accession>
<accession>Q9UBJ6</accession>
<gene>
    <name type="primary">KLK4</name>
    <name type="synonym">EMSP1</name>
    <name type="synonym">PRSS17</name>
    <name type="synonym">PSTS</name>
</gene>
<organism>
    <name type="scientific">Homo sapiens</name>
    <name type="common">Human</name>
    <dbReference type="NCBI Taxonomy" id="9606"/>
    <lineage>
        <taxon>Eukaryota</taxon>
        <taxon>Metazoa</taxon>
        <taxon>Chordata</taxon>
        <taxon>Craniata</taxon>
        <taxon>Vertebrata</taxon>
        <taxon>Euteleostomi</taxon>
        <taxon>Mammalia</taxon>
        <taxon>Eutheria</taxon>
        <taxon>Euarchontoglires</taxon>
        <taxon>Primates</taxon>
        <taxon>Haplorrhini</taxon>
        <taxon>Catarrhini</taxon>
        <taxon>Hominidae</taxon>
        <taxon>Homo</taxon>
    </lineage>
</organism>
<protein>
    <recommendedName>
        <fullName>Kallikrein-4</fullName>
        <ecNumber>3.4.21.-</ecNumber>
    </recommendedName>
    <alternativeName>
        <fullName>Enamel matrix serine proteinase 1</fullName>
    </alternativeName>
    <alternativeName>
        <fullName>Kallikrein-like protein 1</fullName>
        <shortName>KLK-L1</shortName>
    </alternativeName>
    <alternativeName>
        <fullName>Prostase</fullName>
    </alternativeName>
    <alternativeName>
        <fullName>Serine protease 17</fullName>
    </alternativeName>
</protein>
<name>KLK4_HUMAN</name>